<protein>
    <recommendedName>
        <fullName evidence="3">Delta(1)-pyrroline-2-carboxylate reductase</fullName>
        <shortName evidence="3">Pyr2C reductase</shortName>
        <ecNumber evidence="2">1.5.1.49</ecNumber>
    </recommendedName>
</protein>
<sequence>MDEPVRLSLAEVHVLCRDTLVAAGLGEEHAQAIARSITRAEADECHSHGLYRLIGYVASVRSGKAERHALPALARATPAVLRVDAKHGFAPLAVETGVPALIAAAKEIGIAALAIHDCYHFSALWADIEPAVEAGLAAWCFTVGQCCVAPAGGTTPLLGTNPFAFGWPGPSGRPFIFDFATSAAARGEIELKRRGGEKIPPGWAVGPDGAPTTDPAAALAGALLPFGGHKGSALSMMVELIAGPLIGDLTSRQSKAVENGDGGPPLGGELFIAIDPAVFGTGNLSSRLADADELFALAKAQPGVRLPSERRYQARERSRTNGIAVPAALFAELQALGPRGS</sequence>
<gene>
    <name evidence="5" type="ordered locus">Snov_0154</name>
</gene>
<evidence type="ECO:0000250" key="1">
    <source>
        <dbReference type="UniProtKB" id="Q4U331"/>
    </source>
</evidence>
<evidence type="ECO:0000269" key="2">
    <source>
    </source>
</evidence>
<evidence type="ECO:0000303" key="3">
    <source>
    </source>
</evidence>
<evidence type="ECO:0000305" key="4"/>
<evidence type="ECO:0000312" key="5">
    <source>
        <dbReference type="EMBL" id="ADH87490.1"/>
    </source>
</evidence>
<proteinExistence type="evidence at protein level"/>
<comment type="function">
    <text evidence="2">Catalyzes the reduction of Delta(1)-pyrroline-2-carboxylate (Pyr2C) to L-proline, using NADPH as the electron donor. Is likely involved in a degradation pathway that converts cis- and trans-3-hydroxy-L-proline (c3LHyp and t3LHyp) to L-proline, which would allow S.novella to grow on c3LHyp or t3LHyp as a sole carbon source.</text>
</comment>
<comment type="catalytic activity">
    <reaction evidence="2">
        <text>L-proline + NAD(+) = 1-pyrroline-2-carboxylate + NADH + H(+)</text>
        <dbReference type="Rhea" id="RHEA:20321"/>
        <dbReference type="ChEBI" id="CHEBI:15378"/>
        <dbReference type="ChEBI" id="CHEBI:39785"/>
        <dbReference type="ChEBI" id="CHEBI:57540"/>
        <dbReference type="ChEBI" id="CHEBI:57945"/>
        <dbReference type="ChEBI" id="CHEBI:60039"/>
        <dbReference type="EC" id="1.5.1.49"/>
    </reaction>
</comment>
<comment type="catalytic activity">
    <reaction evidence="2">
        <text>L-proline + NADP(+) = 1-pyrroline-2-carboxylate + NADPH + H(+)</text>
        <dbReference type="Rhea" id="RHEA:20317"/>
        <dbReference type="ChEBI" id="CHEBI:15378"/>
        <dbReference type="ChEBI" id="CHEBI:39785"/>
        <dbReference type="ChEBI" id="CHEBI:57783"/>
        <dbReference type="ChEBI" id="CHEBI:58349"/>
        <dbReference type="ChEBI" id="CHEBI:60039"/>
        <dbReference type="EC" id="1.5.1.49"/>
    </reaction>
</comment>
<comment type="biophysicochemical properties">
    <kinetics>
        <KM evidence="2">2.8 mM for 1-pyrroline-2-carboxylate</KM>
        <text evidence="2">kcat is 26 sec(-1) for Pyr2C reduction using NADPH.</text>
    </kinetics>
</comment>
<comment type="subunit">
    <text evidence="1">Homodimer.</text>
</comment>
<comment type="similarity">
    <text evidence="4">Belongs to the LDH2/MDH2 oxidoreductase family.</text>
</comment>
<organism>
    <name type="scientific">Ancylobacter novellus (strain ATCC 8093 / DSM 506 / JCM 20403 / CCM 1077 / IAM 12100 / NBRC 12443 / NCIMB 10456)</name>
    <name type="common">Starkeya novella</name>
    <dbReference type="NCBI Taxonomy" id="639283"/>
    <lineage>
        <taxon>Bacteria</taxon>
        <taxon>Pseudomonadati</taxon>
        <taxon>Pseudomonadota</taxon>
        <taxon>Alphaproteobacteria</taxon>
        <taxon>Hyphomicrobiales</taxon>
        <taxon>Xanthobacteraceae</taxon>
        <taxon>Ancylobacter</taxon>
    </lineage>
</organism>
<dbReference type="EC" id="1.5.1.49" evidence="2"/>
<dbReference type="EMBL" id="CP002026">
    <property type="protein sequence ID" value="ADH87490.1"/>
    <property type="molecule type" value="Genomic_DNA"/>
</dbReference>
<dbReference type="RefSeq" id="WP_013164995.1">
    <property type="nucleotide sequence ID" value="NC_014217.1"/>
</dbReference>
<dbReference type="SMR" id="D7A0Y0"/>
<dbReference type="STRING" id="639283.Snov_0154"/>
<dbReference type="KEGG" id="sno:Snov_0154"/>
<dbReference type="eggNOG" id="COG2055">
    <property type="taxonomic scope" value="Bacteria"/>
</dbReference>
<dbReference type="HOGENOM" id="CLU_040452_0_0_5"/>
<dbReference type="OrthoDB" id="9811519at2"/>
<dbReference type="Proteomes" id="UP000006633">
    <property type="component" value="Chromosome"/>
</dbReference>
<dbReference type="GO" id="GO:0050241">
    <property type="term" value="F:pyrroline-2-carboxylate reductase activity"/>
    <property type="evidence" value="ECO:0000314"/>
    <property type="project" value="UniProtKB"/>
</dbReference>
<dbReference type="GO" id="GO:0006560">
    <property type="term" value="P:proline metabolic process"/>
    <property type="evidence" value="ECO:0000314"/>
    <property type="project" value="UniProtKB"/>
</dbReference>
<dbReference type="Gene3D" id="1.10.1530.10">
    <property type="match status" value="1"/>
</dbReference>
<dbReference type="Gene3D" id="3.30.1370.60">
    <property type="entry name" value="Hypothetical oxidoreductase yiak, domain 2"/>
    <property type="match status" value="1"/>
</dbReference>
<dbReference type="InterPro" id="IPR043144">
    <property type="entry name" value="Mal/L-sulf/L-lact_DH-like_ah"/>
</dbReference>
<dbReference type="InterPro" id="IPR043143">
    <property type="entry name" value="Mal/L-sulf/L-lact_DH-like_NADP"/>
</dbReference>
<dbReference type="InterPro" id="IPR036111">
    <property type="entry name" value="Mal/L-sulfo/L-lacto_DH-like_sf"/>
</dbReference>
<dbReference type="InterPro" id="IPR003767">
    <property type="entry name" value="Malate/L-lactate_DH-like"/>
</dbReference>
<dbReference type="PANTHER" id="PTHR11091:SF0">
    <property type="entry name" value="MALATE DEHYDROGENASE"/>
    <property type="match status" value="1"/>
</dbReference>
<dbReference type="PANTHER" id="PTHR11091">
    <property type="entry name" value="OXIDOREDUCTASE-RELATED"/>
    <property type="match status" value="1"/>
</dbReference>
<dbReference type="Pfam" id="PF02615">
    <property type="entry name" value="Ldh_2"/>
    <property type="match status" value="1"/>
</dbReference>
<dbReference type="SUPFAM" id="SSF89733">
    <property type="entry name" value="L-sulfolactate dehydrogenase-like"/>
    <property type="match status" value="1"/>
</dbReference>
<name>PY2CR_ANCN5</name>
<keyword id="KW-0521">NADP</keyword>
<keyword id="KW-0560">Oxidoreductase</keyword>
<accession>D7A0Y0</accession>
<feature type="chain" id="PRO_0000433400" description="Delta(1)-pyrroline-2-carboxylate reductase">
    <location>
        <begin position="1"/>
        <end position="341"/>
    </location>
</feature>
<feature type="active site" description="Charge relay system" evidence="1">
    <location>
        <position position="47"/>
    </location>
</feature>
<feature type="active site" description="Proton donor" evidence="1">
    <location>
        <position position="48"/>
    </location>
</feature>
<feature type="active site" description="Charge relay system" evidence="1">
    <location>
        <position position="188"/>
    </location>
</feature>
<feature type="binding site" evidence="1">
    <location>
        <position position="52"/>
    </location>
    <ligand>
        <name>substrate</name>
    </ligand>
</feature>
<feature type="binding site" description="in other chain" evidence="1">
    <location>
        <begin position="120"/>
        <end position="124"/>
    </location>
    <ligand>
        <name>NADP(+)</name>
        <dbReference type="ChEBI" id="CHEBI:58349"/>
        <note>ligand shared between dimeric partners</note>
    </ligand>
</feature>
<feature type="binding site" evidence="1">
    <location>
        <position position="160"/>
    </location>
    <ligand>
        <name>substrate</name>
    </ligand>
</feature>
<feature type="binding site" description="in other chain" evidence="1">
    <location>
        <begin position="178"/>
        <end position="180"/>
    </location>
    <ligand>
        <name>NADP(+)</name>
        <dbReference type="ChEBI" id="CHEBI:58349"/>
        <note>ligand shared between dimeric partners</note>
    </ligand>
</feature>
<feature type="binding site" evidence="1">
    <location>
        <begin position="186"/>
        <end position="187"/>
    </location>
    <ligand>
        <name>substrate</name>
    </ligand>
</feature>
<feature type="binding site" evidence="1">
    <location>
        <begin position="229"/>
        <end position="230"/>
    </location>
    <ligand>
        <name>NADP(+)</name>
        <dbReference type="ChEBI" id="CHEBI:58349"/>
        <note>ligand shared between dimeric partners</note>
    </ligand>
</feature>
<feature type="binding site" description="in other chain" evidence="1">
    <location>
        <begin position="305"/>
        <end position="311"/>
    </location>
    <ligand>
        <name>NADP(+)</name>
        <dbReference type="ChEBI" id="CHEBI:58349"/>
        <note>ligand shared between dimeric partners</note>
    </ligand>
</feature>
<reference key="1">
    <citation type="journal article" date="2012" name="Stand. Genomic Sci.">
        <title>Complete genome sequence of the facultatively chemolithoautotrophic and methylotrophic alpha Proteobacterium Starkeya novella type strain (ATCC 8093(T)).</title>
        <authorList>
            <person name="Kappler U."/>
            <person name="Davenport K."/>
            <person name="Beatson S."/>
            <person name="Lucas S."/>
            <person name="Lapidus A."/>
            <person name="Copeland A."/>
            <person name="Berry K.W."/>
            <person name="Glavina Del Rio T."/>
            <person name="Hammon N."/>
            <person name="Dalin E."/>
            <person name="Tice H."/>
            <person name="Pitluck S."/>
            <person name="Richardson P."/>
            <person name="Bruce D."/>
            <person name="Goodwin L.A."/>
            <person name="Han C."/>
            <person name="Tapia R."/>
            <person name="Detter J.C."/>
            <person name="Chang Y.J."/>
            <person name="Jeffries C.D."/>
            <person name="Land M."/>
            <person name="Hauser L."/>
            <person name="Kyrpides N.C."/>
            <person name="Goker M."/>
            <person name="Ivanova N."/>
            <person name="Klenk H.P."/>
            <person name="Woyke T."/>
        </authorList>
    </citation>
    <scope>NUCLEOTIDE SEQUENCE [LARGE SCALE GENOMIC DNA]</scope>
    <source>
        <strain>ATCC 8093 / DSM 506 / JCM 20403 / CCM 1077 / IAM 12100 / NBRC 12443 / NCIMB 10456</strain>
    </source>
</reference>
<reference key="2">
    <citation type="journal article" date="2015" name="J. Am. Chem. Soc.">
        <title>A unique cis-3-hydroxy-L-proline dehydratase in the enolase superfamily.</title>
        <authorList>
            <person name="Zhang X."/>
            <person name="Kumar R."/>
            <person name="Vetting M.W."/>
            <person name="Zhao S."/>
            <person name="Jacobson M.P."/>
            <person name="Almo S.C."/>
            <person name="Gerlt J.A."/>
        </authorList>
    </citation>
    <scope>FUNCTION</scope>
    <scope>CATALYTIC ACTIVITY</scope>
    <scope>BIOPHYSICOCHEMICAL PROPERTIES</scope>
    <source>
        <strain>ATCC 8093 / DSM 506 / JCM 20403 / CCM 1077 / IAM 12100 / NBRC 12443 / NCIMB 10456</strain>
    </source>
</reference>